<proteinExistence type="inferred from homology"/>
<gene>
    <name evidence="1" type="primary">ihfA</name>
    <name evidence="1" type="synonym">himA</name>
    <name type="ordered locus">MCA0699</name>
</gene>
<name>IHFA_METCA</name>
<dbReference type="EMBL" id="AE017282">
    <property type="protein sequence ID" value="AAU93163.1"/>
    <property type="molecule type" value="Genomic_DNA"/>
</dbReference>
<dbReference type="RefSeq" id="WP_010960037.1">
    <property type="nucleotide sequence ID" value="NC_002977.6"/>
</dbReference>
<dbReference type="SMR" id="Q60AY8"/>
<dbReference type="STRING" id="243233.MCA0699"/>
<dbReference type="GeneID" id="88223019"/>
<dbReference type="KEGG" id="mca:MCA0699"/>
<dbReference type="eggNOG" id="COG0776">
    <property type="taxonomic scope" value="Bacteria"/>
</dbReference>
<dbReference type="HOGENOM" id="CLU_105066_1_3_6"/>
<dbReference type="Proteomes" id="UP000006821">
    <property type="component" value="Chromosome"/>
</dbReference>
<dbReference type="GO" id="GO:0005829">
    <property type="term" value="C:cytosol"/>
    <property type="evidence" value="ECO:0007669"/>
    <property type="project" value="TreeGrafter"/>
</dbReference>
<dbReference type="GO" id="GO:0003677">
    <property type="term" value="F:DNA binding"/>
    <property type="evidence" value="ECO:0007669"/>
    <property type="project" value="UniProtKB-UniRule"/>
</dbReference>
<dbReference type="GO" id="GO:0030527">
    <property type="term" value="F:structural constituent of chromatin"/>
    <property type="evidence" value="ECO:0007669"/>
    <property type="project" value="InterPro"/>
</dbReference>
<dbReference type="GO" id="GO:0006310">
    <property type="term" value="P:DNA recombination"/>
    <property type="evidence" value="ECO:0007669"/>
    <property type="project" value="UniProtKB-UniRule"/>
</dbReference>
<dbReference type="GO" id="GO:0009893">
    <property type="term" value="P:positive regulation of metabolic process"/>
    <property type="evidence" value="ECO:0007669"/>
    <property type="project" value="UniProtKB-ARBA"/>
</dbReference>
<dbReference type="GO" id="GO:0006355">
    <property type="term" value="P:regulation of DNA-templated transcription"/>
    <property type="evidence" value="ECO:0007669"/>
    <property type="project" value="UniProtKB-UniRule"/>
</dbReference>
<dbReference type="GO" id="GO:0006417">
    <property type="term" value="P:regulation of translation"/>
    <property type="evidence" value="ECO:0007669"/>
    <property type="project" value="UniProtKB-UniRule"/>
</dbReference>
<dbReference type="CDD" id="cd13835">
    <property type="entry name" value="IHF_A"/>
    <property type="match status" value="1"/>
</dbReference>
<dbReference type="FunFam" id="4.10.520.10:FF:000002">
    <property type="entry name" value="Integration host factor subunit alpha"/>
    <property type="match status" value="1"/>
</dbReference>
<dbReference type="Gene3D" id="4.10.520.10">
    <property type="entry name" value="IHF-like DNA-binding proteins"/>
    <property type="match status" value="1"/>
</dbReference>
<dbReference type="HAMAP" id="MF_00380">
    <property type="entry name" value="IHF_alpha"/>
    <property type="match status" value="1"/>
</dbReference>
<dbReference type="InterPro" id="IPR000119">
    <property type="entry name" value="Hist_DNA-bd"/>
</dbReference>
<dbReference type="InterPro" id="IPR020816">
    <property type="entry name" value="Histone-like_DNA-bd_CS"/>
</dbReference>
<dbReference type="InterPro" id="IPR010992">
    <property type="entry name" value="IHF-like_DNA-bd_dom_sf"/>
</dbReference>
<dbReference type="InterPro" id="IPR005684">
    <property type="entry name" value="IHF_alpha"/>
</dbReference>
<dbReference type="NCBIfam" id="TIGR00987">
    <property type="entry name" value="himA"/>
    <property type="match status" value="1"/>
</dbReference>
<dbReference type="NCBIfam" id="NF001401">
    <property type="entry name" value="PRK00285.1"/>
    <property type="match status" value="1"/>
</dbReference>
<dbReference type="PANTHER" id="PTHR33175">
    <property type="entry name" value="DNA-BINDING PROTEIN HU"/>
    <property type="match status" value="1"/>
</dbReference>
<dbReference type="PANTHER" id="PTHR33175:SF2">
    <property type="entry name" value="INTEGRATION HOST FACTOR SUBUNIT ALPHA"/>
    <property type="match status" value="1"/>
</dbReference>
<dbReference type="Pfam" id="PF00216">
    <property type="entry name" value="Bac_DNA_binding"/>
    <property type="match status" value="1"/>
</dbReference>
<dbReference type="PRINTS" id="PR01727">
    <property type="entry name" value="DNABINDINGHU"/>
</dbReference>
<dbReference type="SMART" id="SM00411">
    <property type="entry name" value="BHL"/>
    <property type="match status" value="1"/>
</dbReference>
<dbReference type="SUPFAM" id="SSF47729">
    <property type="entry name" value="IHF-like DNA-binding proteins"/>
    <property type="match status" value="1"/>
</dbReference>
<dbReference type="PROSITE" id="PS00045">
    <property type="entry name" value="HISTONE_LIKE"/>
    <property type="match status" value="1"/>
</dbReference>
<evidence type="ECO:0000255" key="1">
    <source>
        <dbReference type="HAMAP-Rule" id="MF_00380"/>
    </source>
</evidence>
<keyword id="KW-0233">DNA recombination</keyword>
<keyword id="KW-0238">DNA-binding</keyword>
<keyword id="KW-1185">Reference proteome</keyword>
<keyword id="KW-0804">Transcription</keyword>
<keyword id="KW-0805">Transcription regulation</keyword>
<keyword id="KW-0810">Translation regulation</keyword>
<reference key="1">
    <citation type="journal article" date="2004" name="PLoS Biol.">
        <title>Genomic insights into methanotrophy: the complete genome sequence of Methylococcus capsulatus (Bath).</title>
        <authorList>
            <person name="Ward N.L."/>
            <person name="Larsen O."/>
            <person name="Sakwa J."/>
            <person name="Bruseth L."/>
            <person name="Khouri H.M."/>
            <person name="Durkin A.S."/>
            <person name="Dimitrov G."/>
            <person name="Jiang L."/>
            <person name="Scanlan D."/>
            <person name="Kang K.H."/>
            <person name="Lewis M.R."/>
            <person name="Nelson K.E."/>
            <person name="Methe B.A."/>
            <person name="Wu M."/>
            <person name="Heidelberg J.F."/>
            <person name="Paulsen I.T."/>
            <person name="Fouts D.E."/>
            <person name="Ravel J."/>
            <person name="Tettelin H."/>
            <person name="Ren Q."/>
            <person name="Read T.D."/>
            <person name="DeBoy R.T."/>
            <person name="Seshadri R."/>
            <person name="Salzberg S.L."/>
            <person name="Jensen H.B."/>
            <person name="Birkeland N.K."/>
            <person name="Nelson W.C."/>
            <person name="Dodson R.J."/>
            <person name="Grindhaug S.H."/>
            <person name="Holt I.E."/>
            <person name="Eidhammer I."/>
            <person name="Jonasen I."/>
            <person name="Vanaken S."/>
            <person name="Utterback T.R."/>
            <person name="Feldblyum T.V."/>
            <person name="Fraser C.M."/>
            <person name="Lillehaug J.R."/>
            <person name="Eisen J.A."/>
        </authorList>
    </citation>
    <scope>NUCLEOTIDE SEQUENCE [LARGE SCALE GENOMIC DNA]</scope>
    <source>
        <strain>ATCC 33009 / NCIMB 11132 / Bath</strain>
    </source>
</reference>
<sequence length="110" mass="12304">MALTKADMVERLFSELGLNKRDAKELVDQFFEVIKASLESGRSVKLSGFGNFDLRDKRQRPGRNPKTGEEIPITARRVVTFKAGQKLKATVEALQEPELGKLDAERTGEV</sequence>
<organism>
    <name type="scientific">Methylococcus capsulatus (strain ATCC 33009 / NCIMB 11132 / Bath)</name>
    <dbReference type="NCBI Taxonomy" id="243233"/>
    <lineage>
        <taxon>Bacteria</taxon>
        <taxon>Pseudomonadati</taxon>
        <taxon>Pseudomonadota</taxon>
        <taxon>Gammaproteobacteria</taxon>
        <taxon>Methylococcales</taxon>
        <taxon>Methylococcaceae</taxon>
        <taxon>Methylococcus</taxon>
    </lineage>
</organism>
<feature type="chain" id="PRO_0000277745" description="Integration host factor subunit alpha">
    <location>
        <begin position="1"/>
        <end position="110"/>
    </location>
</feature>
<accession>Q60AY8</accession>
<comment type="function">
    <text evidence="1">This protein is one of the two subunits of integration host factor, a specific DNA-binding protein that functions in genetic recombination as well as in transcriptional and translational control.</text>
</comment>
<comment type="subunit">
    <text evidence="1">Heterodimer of an alpha and a beta chain.</text>
</comment>
<comment type="similarity">
    <text evidence="1">Belongs to the bacterial histone-like protein family.</text>
</comment>
<protein>
    <recommendedName>
        <fullName evidence="1">Integration host factor subunit alpha</fullName>
        <shortName evidence="1">IHF-alpha</shortName>
    </recommendedName>
</protein>